<gene>
    <name type="primary">37</name>
</gene>
<organismHost>
    <name type="scientific">Escherichia coli</name>
    <dbReference type="NCBI Taxonomy" id="562"/>
</organismHost>
<name>FIB37_BPOX2</name>
<comment type="function">
    <molecule>Mature tail fiber protein Gp37</molecule>
    <text evidence="1">Constitues the trimeric tip of the long tail fiber that mediates the attachment to the host receptor, together with the receptor-recognizing protein Gp38.</text>
</comment>
<comment type="function">
    <molecule>Intramolecular chaperone</molecule>
    <text evidence="3">The C-terminal chaperone protein mediates homotrimerization and proper folding of the catalytic trimer.</text>
</comment>
<comment type="subunit">
    <text evidence="1">Homotrimer. Interacts with the receptor-recognizing protein Gp38.</text>
</comment>
<comment type="subcellular location">
    <subcellularLocation>
        <location evidence="1">Virion</location>
    </subcellularLocation>
</comment>
<comment type="PTM">
    <text evidence="1">Proteolytic cleavage and release of the chaperone in the host cytosol stabilizes the folded protein.</text>
</comment>
<comment type="similarity">
    <text evidence="5">Belongs to the S16-like long tail fiber protein Gp37 family.</text>
</comment>
<protein>
    <recommendedName>
        <fullName>Long tail fiber protein Gp37</fullName>
        <shortName>Protein Gp37</shortName>
    </recommendedName>
    <alternativeName>
        <fullName evidence="5">Receptor-recognizing protein</fullName>
    </alternativeName>
    <component>
        <recommendedName>
            <fullName evidence="2">Mature tail fiber protein Gp37</fullName>
        </recommendedName>
    </component>
    <component>
        <recommendedName>
            <fullName evidence="3">Intramolecular chaperone</fullName>
        </recommendedName>
    </component>
</protein>
<organism>
    <name type="scientific">Enterobacteria phage Ox2</name>
    <name type="common">Bacteriophage Ox2</name>
    <dbReference type="NCBI Taxonomy" id="10691"/>
    <lineage>
        <taxon>Viruses</taxon>
        <taxon>Duplodnaviria</taxon>
        <taxon>Heunggongvirae</taxon>
        <taxon>Uroviricota</taxon>
        <taxon>Caudoviricetes</taxon>
        <taxon>Straboviridae</taxon>
        <taxon>Tevenvirinae</taxon>
        <taxon>Tequatrovirus</taxon>
    </lineage>
</organism>
<proteinExistence type="inferred from homology"/>
<dbReference type="EMBL" id="X05675">
    <property type="protein sequence ID" value="CAA29157.1"/>
    <property type="molecule type" value="Genomic_DNA"/>
</dbReference>
<dbReference type="PIR" id="PS0062">
    <property type="entry name" value="TLBP3X"/>
</dbReference>
<dbReference type="SMR" id="P08232"/>
<dbReference type="GO" id="GO:0098024">
    <property type="term" value="C:virus tail, fiber"/>
    <property type="evidence" value="ECO:0007669"/>
    <property type="project" value="UniProtKB-KW"/>
</dbReference>
<dbReference type="GO" id="GO:0046718">
    <property type="term" value="P:symbiont entry into host cell"/>
    <property type="evidence" value="ECO:0007669"/>
    <property type="project" value="UniProtKB-KW"/>
</dbReference>
<dbReference type="GO" id="GO:0019062">
    <property type="term" value="P:virion attachment to host cell"/>
    <property type="evidence" value="ECO:0007669"/>
    <property type="project" value="UniProtKB-KW"/>
</dbReference>
<dbReference type="InterPro" id="IPR030392">
    <property type="entry name" value="S74_ICA"/>
</dbReference>
<dbReference type="Pfam" id="PF13884">
    <property type="entry name" value="Peptidase_S74"/>
    <property type="match status" value="1"/>
</dbReference>
<dbReference type="PROSITE" id="PS51688">
    <property type="entry name" value="ICA"/>
    <property type="match status" value="1"/>
</dbReference>
<keyword id="KW-0945">Host-virus interaction</keyword>
<keyword id="KW-1161">Viral attachment to host cell</keyword>
<keyword id="KW-1230">Viral tail fiber protein</keyword>
<keyword id="KW-1227">Viral tail protein</keyword>
<keyword id="KW-0946">Virion</keyword>
<keyword id="KW-1160">Virus entry into host cell</keyword>
<sequence length="251" mass="28077">VYITNAGDITLSPKGVEMAHVNNVRLYVHGERWTASQPGDWGSQWQVEAPIFVDHGYVSQDCYYPIIKGRSVITNQGFVTAVDLGIRRVNNNWGQAIIRVGSAEASPAAGHPNAVFEFHYDGTFYSPGNGNFSDVYIRSDGRLKINKKELENGALEKVCRLKVYTYDKVKSIKDRSVIKREVGIIAQDLEKELPEAVSKVEVDGSDVLTISNSAVNALLIKAIQEMSEEIKELKTPFFTKIARKISKYFKF</sequence>
<evidence type="ECO:0000250" key="1">
    <source>
        <dbReference type="UniProtKB" id="M1EAS5"/>
    </source>
</evidence>
<evidence type="ECO:0000250" key="2">
    <source>
        <dbReference type="UniProtKB" id="P49714"/>
    </source>
</evidence>
<evidence type="ECO:0000250" key="3">
    <source>
        <dbReference type="UniProtKB" id="Q04830"/>
    </source>
</evidence>
<evidence type="ECO:0000255" key="4">
    <source>
        <dbReference type="PROSITE-ProRule" id="PRU01025"/>
    </source>
</evidence>
<evidence type="ECO:0000305" key="5"/>
<reference key="1">
    <citation type="journal article" date="1987" name="J. Mol. Biol.">
        <title>Receptor-recognizing proteins of T-even type bacteriophages. Constant and hypervariable regions and an unusual case of evolution.</title>
        <authorList>
            <person name="Montag D."/>
            <person name="Riede I."/>
            <person name="Eschbach M.-L."/>
            <person name="Degen M."/>
            <person name="Henning U."/>
        </authorList>
    </citation>
    <scope>NUCLEOTIDE SEQUENCE [GENOMIC DNA]</scope>
</reference>
<feature type="chain" id="PRO_0000165030" description="Long tail fiber protein Gp37">
    <location>
        <begin position="1" status="less than"/>
        <end position="251"/>
    </location>
</feature>
<feature type="chain" id="PRO_0000458681" description="Mature tail fiber protein Gp37" evidence="3">
    <location>
        <begin position="1" status="less than"/>
        <end position="139"/>
    </location>
</feature>
<feature type="chain" id="PRO_0000458682" description="Intramolecular chaperone" evidence="3">
    <location>
        <begin position="140"/>
        <end position="251"/>
    </location>
</feature>
<feature type="domain" description="Peptidase S74" evidence="4">
    <location>
        <begin position="139"/>
        <end position="237"/>
    </location>
</feature>
<feature type="region of interest" description="Interaction with the receptor-recognizing protein gp38" evidence="1">
    <location>
        <begin position="134"/>
        <end position="137"/>
    </location>
</feature>
<feature type="site" description="Cleavage; by autolysis" evidence="2">
    <location>
        <begin position="139"/>
        <end position="140"/>
    </location>
</feature>
<feature type="non-terminal residue">
    <location>
        <position position="1"/>
    </location>
</feature>
<accession>P08232</accession>